<organism>
    <name type="scientific">Polynucleobacter necessarius subsp. necessarius (strain STIR1)</name>
    <dbReference type="NCBI Taxonomy" id="452638"/>
    <lineage>
        <taxon>Bacteria</taxon>
        <taxon>Pseudomonadati</taxon>
        <taxon>Pseudomonadota</taxon>
        <taxon>Betaproteobacteria</taxon>
        <taxon>Burkholderiales</taxon>
        <taxon>Burkholderiaceae</taxon>
        <taxon>Polynucleobacter</taxon>
    </lineage>
</organism>
<protein>
    <recommendedName>
        <fullName evidence="1">Small ribosomal subunit protein uS11</fullName>
    </recommendedName>
    <alternativeName>
        <fullName evidence="2">30S ribosomal protein S11</fullName>
    </alternativeName>
</protein>
<dbReference type="EMBL" id="CP001010">
    <property type="protein sequence ID" value="ACB43402.1"/>
    <property type="molecule type" value="Genomic_DNA"/>
</dbReference>
<dbReference type="SMR" id="B1XSS5"/>
<dbReference type="STRING" id="452638.Pnec_0074"/>
<dbReference type="KEGG" id="pne:Pnec_0074"/>
<dbReference type="eggNOG" id="COG0100">
    <property type="taxonomic scope" value="Bacteria"/>
</dbReference>
<dbReference type="HOGENOM" id="CLU_072439_5_0_4"/>
<dbReference type="OrthoDB" id="9806415at2"/>
<dbReference type="GO" id="GO:1990904">
    <property type="term" value="C:ribonucleoprotein complex"/>
    <property type="evidence" value="ECO:0007669"/>
    <property type="project" value="UniProtKB-KW"/>
</dbReference>
<dbReference type="GO" id="GO:0005840">
    <property type="term" value="C:ribosome"/>
    <property type="evidence" value="ECO:0007669"/>
    <property type="project" value="UniProtKB-KW"/>
</dbReference>
<dbReference type="GO" id="GO:0019843">
    <property type="term" value="F:rRNA binding"/>
    <property type="evidence" value="ECO:0007669"/>
    <property type="project" value="UniProtKB-UniRule"/>
</dbReference>
<dbReference type="GO" id="GO:0003735">
    <property type="term" value="F:structural constituent of ribosome"/>
    <property type="evidence" value="ECO:0007669"/>
    <property type="project" value="InterPro"/>
</dbReference>
<dbReference type="GO" id="GO:0006412">
    <property type="term" value="P:translation"/>
    <property type="evidence" value="ECO:0007669"/>
    <property type="project" value="UniProtKB-UniRule"/>
</dbReference>
<dbReference type="FunFam" id="3.30.420.80:FF:000001">
    <property type="entry name" value="30S ribosomal protein S11"/>
    <property type="match status" value="1"/>
</dbReference>
<dbReference type="Gene3D" id="3.30.420.80">
    <property type="entry name" value="Ribosomal protein S11"/>
    <property type="match status" value="1"/>
</dbReference>
<dbReference type="HAMAP" id="MF_01310">
    <property type="entry name" value="Ribosomal_uS11"/>
    <property type="match status" value="1"/>
</dbReference>
<dbReference type="InterPro" id="IPR001971">
    <property type="entry name" value="Ribosomal_uS11"/>
</dbReference>
<dbReference type="InterPro" id="IPR019981">
    <property type="entry name" value="Ribosomal_uS11_bac-type"/>
</dbReference>
<dbReference type="InterPro" id="IPR018102">
    <property type="entry name" value="Ribosomal_uS11_CS"/>
</dbReference>
<dbReference type="InterPro" id="IPR036967">
    <property type="entry name" value="Ribosomal_uS11_sf"/>
</dbReference>
<dbReference type="NCBIfam" id="NF003698">
    <property type="entry name" value="PRK05309.1"/>
    <property type="match status" value="1"/>
</dbReference>
<dbReference type="NCBIfam" id="TIGR03632">
    <property type="entry name" value="uS11_bact"/>
    <property type="match status" value="1"/>
</dbReference>
<dbReference type="PANTHER" id="PTHR11759">
    <property type="entry name" value="40S RIBOSOMAL PROTEIN S14/30S RIBOSOMAL PROTEIN S11"/>
    <property type="match status" value="1"/>
</dbReference>
<dbReference type="Pfam" id="PF00411">
    <property type="entry name" value="Ribosomal_S11"/>
    <property type="match status" value="1"/>
</dbReference>
<dbReference type="PIRSF" id="PIRSF002131">
    <property type="entry name" value="Ribosomal_S11"/>
    <property type="match status" value="1"/>
</dbReference>
<dbReference type="SUPFAM" id="SSF53137">
    <property type="entry name" value="Translational machinery components"/>
    <property type="match status" value="1"/>
</dbReference>
<dbReference type="PROSITE" id="PS00054">
    <property type="entry name" value="RIBOSOMAL_S11"/>
    <property type="match status" value="1"/>
</dbReference>
<comment type="function">
    <text evidence="1">Located on the platform of the 30S subunit, it bridges several disparate RNA helices of the 16S rRNA. Forms part of the Shine-Dalgarno cleft in the 70S ribosome.</text>
</comment>
<comment type="subunit">
    <text evidence="1">Part of the 30S ribosomal subunit. Interacts with proteins S7 and S18. Binds to IF-3.</text>
</comment>
<comment type="similarity">
    <text evidence="1">Belongs to the universal ribosomal protein uS11 family.</text>
</comment>
<accession>B1XSS5</accession>
<sequence length="135" mass="14238">MAQQKSAAAASQRARKKVKKNVADGIAHVHTSFNNTIITITDRQGNALSWATSGGQGFKGSRKSTPFAAQVAAEVAGKTAIECGIKSLEAQIKGPGPGRESAVRALNSLGIKITEIQDVTPVPHNGCRPPKRRRI</sequence>
<feature type="chain" id="PRO_1000141121" description="Small ribosomal subunit protein uS11">
    <location>
        <begin position="1"/>
        <end position="135"/>
    </location>
</feature>
<proteinExistence type="inferred from homology"/>
<evidence type="ECO:0000255" key="1">
    <source>
        <dbReference type="HAMAP-Rule" id="MF_01310"/>
    </source>
</evidence>
<evidence type="ECO:0000305" key="2"/>
<keyword id="KW-0687">Ribonucleoprotein</keyword>
<keyword id="KW-0689">Ribosomal protein</keyword>
<keyword id="KW-0694">RNA-binding</keyword>
<keyword id="KW-0699">rRNA-binding</keyword>
<reference key="1">
    <citation type="journal article" date="2013" name="Proc. Natl. Acad. Sci. U.S.A.">
        <title>Polynucleobacter necessarius, a model for genome reduction in both free-living and symbiotic bacteria.</title>
        <authorList>
            <person name="Boscaro V."/>
            <person name="Felletti M."/>
            <person name="Vannini C."/>
            <person name="Ackerman M.S."/>
            <person name="Chain P.S."/>
            <person name="Malfatti S."/>
            <person name="Vergez L.M."/>
            <person name="Shin M."/>
            <person name="Doak T.G."/>
            <person name="Lynch M."/>
            <person name="Petroni G."/>
        </authorList>
    </citation>
    <scope>NUCLEOTIDE SEQUENCE [LARGE SCALE GENOMIC DNA]</scope>
    <source>
        <strain>STIR1</strain>
    </source>
</reference>
<gene>
    <name evidence="1" type="primary">rpsK</name>
    <name type="ordered locus">Pnec_0074</name>
</gene>
<name>RS11_POLNS</name>